<comment type="function">
    <text evidence="2 5">Forms a water channel that facilitates the transport of water across cell membranes, playing a crucial role in water homeostasis in various tissues (PubMed:12133842). Could also be permeable to small solutes including hydrogen peroxide, glycerol and gases such as amonnia (NH3), nitric oxide (NO) and carbon dioxide (CO2). Recruited to the ankyrin-1 complex, a multiprotein complex of the erythrocyte membrane, it could be part of a CO2 metabolon, linking facilitated diffusion of CO2 across the membrane, anion exchange of Cl(-)/HCO3(-) and interconversion of dissolved CO2 and carbonic acid in the cytosol. In vitro, it shows non-selective gated cation channel activity and may be permeable to cations like K(+) and Na(+) in vivo (By similarity).</text>
</comment>
<comment type="catalytic activity">
    <reaction evidence="2">
        <text>H2O(in) = H2O(out)</text>
        <dbReference type="Rhea" id="RHEA:29667"/>
        <dbReference type="ChEBI" id="CHEBI:15377"/>
    </reaction>
</comment>
<comment type="catalytic activity">
    <reaction evidence="2">
        <text>nitric oxide(out) = nitric oxide(in)</text>
        <dbReference type="Rhea" id="RHEA:74895"/>
        <dbReference type="ChEBI" id="CHEBI:16480"/>
    </reaction>
</comment>
<comment type="catalytic activity">
    <reaction evidence="2">
        <text>CO2(out) = CO2(in)</text>
        <dbReference type="Rhea" id="RHEA:74891"/>
        <dbReference type="ChEBI" id="CHEBI:16526"/>
    </reaction>
</comment>
<comment type="catalytic activity">
    <reaction evidence="2">
        <text>glycerol(in) = glycerol(out)</text>
        <dbReference type="Rhea" id="RHEA:29675"/>
        <dbReference type="ChEBI" id="CHEBI:17754"/>
    </reaction>
</comment>
<comment type="catalytic activity">
    <reaction evidence="2">
        <text>H2O2(out) = H2O2(in)</text>
        <dbReference type="Rhea" id="RHEA:74375"/>
        <dbReference type="ChEBI" id="CHEBI:16240"/>
    </reaction>
</comment>
<comment type="catalytic activity">
    <reaction evidence="2">
        <text>K(+)(in) = K(+)(out)</text>
        <dbReference type="Rhea" id="RHEA:29463"/>
        <dbReference type="ChEBI" id="CHEBI:29103"/>
    </reaction>
</comment>
<comment type="catalytic activity">
    <reaction evidence="2">
        <text>Na(+)(in) = Na(+)(out)</text>
        <dbReference type="Rhea" id="RHEA:34963"/>
        <dbReference type="ChEBI" id="CHEBI:29101"/>
    </reaction>
</comment>
<comment type="subunit">
    <text evidence="1 2 4">Homotetramer; each monomer provides an independent water pore. Component of the ankyrin-1 complex in the erythrocyte, composed of ANK1, RHCE, RHAG, SLC4A1, EPB42, GYPA, GYPB and AQP1 (By similarity). Interacts with EPHB2; involved in endolymph production in the inner ear (PubMed:10839360). Identified in a complex with STOM. Interacts (via the N-terminal) with ANK1 (via ANK 1-5 repeats). Interacts (via the C-terminal) with EPB42 (By similarity).</text>
</comment>
<comment type="subcellular location">
    <subcellularLocation>
        <location evidence="5">Cell membrane</location>
        <topology evidence="2">Multi-pass membrane protein</topology>
    </subcellularLocation>
</comment>
<comment type="tissue specificity">
    <text evidence="5 6">Detected in erythrocytes (at protein level) (PubMed:12133842). In the kidney, expressed on luminal and basal borders of proximal tubules and in the thin limb of Henle's loop (at protein level) (PubMed:31605441).</text>
</comment>
<comment type="domain">
    <text evidence="2">Aquaporins contain two tandem repeats each containing three membrane-spanning domains and a pore-forming loop with the signature motif Asn-Pro-Ala (NPA).</text>
</comment>
<comment type="disruption phenotype">
    <text evidence="5">Mutant mice are born at the expected Mendelian rate and appear healthy and normal, but display strongly reduced urine osmolality. Besides, their erythrocytes show reduced water permeability. Mice lacking both Aqp1 and Slc14a1 are born at the expected Mendelian ratio, but do not thrive; half of them die within ten days after birth and none are alive after two weeks. Urine osmolality is somewhat lower than that observed with mice lacking only Aqp1. Besides, erythrocyte water permeability is significantly lower than in mice lacking only Aqp1.</text>
</comment>
<comment type="similarity">
    <text evidence="8">Belongs to the MIP/aquaporin (TC 1.A.8) family.</text>
</comment>
<accession>Q02013</accession>
<accession>Q542P1</accession>
<accession>Q91VY8</accession>
<evidence type="ECO:0000250" key="1"/>
<evidence type="ECO:0000250" key="2">
    <source>
        <dbReference type="UniProtKB" id="P29972"/>
    </source>
</evidence>
<evidence type="ECO:0000255" key="3"/>
<evidence type="ECO:0000269" key="4">
    <source>
    </source>
</evidence>
<evidence type="ECO:0000269" key="5">
    <source>
    </source>
</evidence>
<evidence type="ECO:0000269" key="6">
    <source>
    </source>
</evidence>
<evidence type="ECO:0000303" key="7">
    <source>
    </source>
</evidence>
<evidence type="ECO:0000305" key="8"/>
<evidence type="ECO:0000312" key="9">
    <source>
        <dbReference type="MGI" id="MGI:103201"/>
    </source>
</evidence>
<evidence type="ECO:0007744" key="10">
    <source>
    </source>
</evidence>
<evidence type="ECO:0007744" key="11">
    <source>
    </source>
</evidence>
<name>AQP1_MOUSE</name>
<dbReference type="EMBL" id="L02914">
    <property type="protein sequence ID" value="AAB53928.1"/>
    <property type="molecule type" value="mRNA"/>
</dbReference>
<dbReference type="EMBL" id="AK081886">
    <property type="protein sequence ID" value="BAC38360.1"/>
    <property type="molecule type" value="mRNA"/>
</dbReference>
<dbReference type="EMBL" id="AK086688">
    <property type="protein sequence ID" value="BAC39719.1"/>
    <property type="molecule type" value="mRNA"/>
</dbReference>
<dbReference type="EMBL" id="AK157333">
    <property type="protein sequence ID" value="BAE34051.1"/>
    <property type="molecule type" value="mRNA"/>
</dbReference>
<dbReference type="EMBL" id="AK158226">
    <property type="protein sequence ID" value="BAE34412.1"/>
    <property type="molecule type" value="mRNA"/>
</dbReference>
<dbReference type="EMBL" id="AK158389">
    <property type="protein sequence ID" value="BAE34482.1"/>
    <property type="molecule type" value="mRNA"/>
</dbReference>
<dbReference type="EMBL" id="AK171627">
    <property type="protein sequence ID" value="BAE42573.1"/>
    <property type="molecule type" value="mRNA"/>
</dbReference>
<dbReference type="EMBL" id="AK172361">
    <property type="protein sequence ID" value="BAE42966.1"/>
    <property type="molecule type" value="mRNA"/>
</dbReference>
<dbReference type="EMBL" id="BC007125">
    <property type="protein sequence ID" value="AAH07125.1"/>
    <property type="molecule type" value="mRNA"/>
</dbReference>
<dbReference type="CCDS" id="CCDS20164.1"/>
<dbReference type="PIR" id="B44499">
    <property type="entry name" value="B44499"/>
</dbReference>
<dbReference type="RefSeq" id="NP_031498.1">
    <property type="nucleotide sequence ID" value="NM_007472.2"/>
</dbReference>
<dbReference type="SMR" id="Q02013"/>
<dbReference type="FunCoup" id="Q02013">
    <property type="interactions" value="76"/>
</dbReference>
<dbReference type="IntAct" id="Q02013">
    <property type="interactions" value="1"/>
</dbReference>
<dbReference type="STRING" id="10090.ENSMUSP00000004774"/>
<dbReference type="GlyCosmos" id="Q02013">
    <property type="glycosylation" value="1 site, No reported glycans"/>
</dbReference>
<dbReference type="GlyGen" id="Q02013">
    <property type="glycosylation" value="3 sites, 1 N-linked glycan (1 site), 1 O-linked glycan (1 site)"/>
</dbReference>
<dbReference type="iPTMnet" id="Q02013"/>
<dbReference type="PhosphoSitePlus" id="Q02013"/>
<dbReference type="SwissPalm" id="Q02013"/>
<dbReference type="jPOST" id="Q02013"/>
<dbReference type="PaxDb" id="10090-ENSMUSP00000004774"/>
<dbReference type="PeptideAtlas" id="Q02013"/>
<dbReference type="ProteomicsDB" id="283194"/>
<dbReference type="Pumba" id="Q02013"/>
<dbReference type="DNASU" id="11826"/>
<dbReference type="Ensembl" id="ENSMUST00000004774.4">
    <property type="protein sequence ID" value="ENSMUSP00000004774.4"/>
    <property type="gene ID" value="ENSMUSG00000004655.6"/>
</dbReference>
<dbReference type="GeneID" id="11826"/>
<dbReference type="KEGG" id="mmu:11826"/>
<dbReference type="UCSC" id="uc009caq.1">
    <property type="organism name" value="mouse"/>
</dbReference>
<dbReference type="AGR" id="MGI:103201"/>
<dbReference type="CTD" id="358"/>
<dbReference type="MGI" id="MGI:103201">
    <property type="gene designation" value="Aqp1"/>
</dbReference>
<dbReference type="VEuPathDB" id="HostDB:ENSMUSG00000004655"/>
<dbReference type="eggNOG" id="KOG0223">
    <property type="taxonomic scope" value="Eukaryota"/>
</dbReference>
<dbReference type="GeneTree" id="ENSGT00940000157015"/>
<dbReference type="HOGENOM" id="CLU_020019_3_3_1"/>
<dbReference type="InParanoid" id="Q02013"/>
<dbReference type="OMA" id="FKKKMFW"/>
<dbReference type="OrthoDB" id="3222at2759"/>
<dbReference type="PhylomeDB" id="Q02013"/>
<dbReference type="TreeFam" id="TF312940"/>
<dbReference type="Reactome" id="R-MMU-1237044">
    <property type="pathway name" value="Erythrocytes take up carbon dioxide and release oxygen"/>
</dbReference>
<dbReference type="Reactome" id="R-MMU-1247673">
    <property type="pathway name" value="Erythrocytes take up oxygen and release carbon dioxide"/>
</dbReference>
<dbReference type="Reactome" id="R-MMU-432040">
    <property type="pathway name" value="Vasopressin regulates renal water homeostasis via Aquaporins"/>
</dbReference>
<dbReference type="Reactome" id="R-MMU-432047">
    <property type="pathway name" value="Passive transport by Aquaporins"/>
</dbReference>
<dbReference type="BioGRID-ORCS" id="11826">
    <property type="hits" value="1 hit in 78 CRISPR screens"/>
</dbReference>
<dbReference type="ChiTaRS" id="Aqp1">
    <property type="organism name" value="mouse"/>
</dbReference>
<dbReference type="PRO" id="PR:Q02013"/>
<dbReference type="Proteomes" id="UP000000589">
    <property type="component" value="Chromosome 6"/>
</dbReference>
<dbReference type="RNAct" id="Q02013">
    <property type="molecule type" value="protein"/>
</dbReference>
<dbReference type="Bgee" id="ENSMUSG00000004655">
    <property type="expression patterns" value="Expressed in right lung and 215 other cell types or tissues"/>
</dbReference>
<dbReference type="GO" id="GO:0170014">
    <property type="term" value="C:ankyrin-1 complex"/>
    <property type="evidence" value="ECO:0000250"/>
    <property type="project" value="UniProtKB"/>
</dbReference>
<dbReference type="GO" id="GO:0016324">
    <property type="term" value="C:apical plasma membrane"/>
    <property type="evidence" value="ECO:0000314"/>
    <property type="project" value="UniProtKB"/>
</dbReference>
<dbReference type="GO" id="GO:0030424">
    <property type="term" value="C:axon"/>
    <property type="evidence" value="ECO:0000314"/>
    <property type="project" value="MGI"/>
</dbReference>
<dbReference type="GO" id="GO:0043679">
    <property type="term" value="C:axon terminus"/>
    <property type="evidence" value="ECO:0007669"/>
    <property type="project" value="Ensembl"/>
</dbReference>
<dbReference type="GO" id="GO:0009925">
    <property type="term" value="C:basal plasma membrane"/>
    <property type="evidence" value="ECO:0000314"/>
    <property type="project" value="BHF-UCL"/>
</dbReference>
<dbReference type="GO" id="GO:0016323">
    <property type="term" value="C:basolateral plasma membrane"/>
    <property type="evidence" value="ECO:0000314"/>
    <property type="project" value="UniProtKB"/>
</dbReference>
<dbReference type="GO" id="GO:0005903">
    <property type="term" value="C:brush border"/>
    <property type="evidence" value="ECO:0000314"/>
    <property type="project" value="UniProtKB"/>
</dbReference>
<dbReference type="GO" id="GO:0031526">
    <property type="term" value="C:brush border membrane"/>
    <property type="evidence" value="ECO:0000250"/>
    <property type="project" value="UniProtKB"/>
</dbReference>
<dbReference type="GO" id="GO:0005901">
    <property type="term" value="C:caveola"/>
    <property type="evidence" value="ECO:0000314"/>
    <property type="project" value="BHF-UCL"/>
</dbReference>
<dbReference type="GO" id="GO:0005737">
    <property type="term" value="C:cytoplasm"/>
    <property type="evidence" value="ECO:0000250"/>
    <property type="project" value="UniProtKB"/>
</dbReference>
<dbReference type="GO" id="GO:0032127">
    <property type="term" value="C:dense core granule membrane"/>
    <property type="evidence" value="ECO:0000266"/>
    <property type="project" value="MGI"/>
</dbReference>
<dbReference type="GO" id="GO:0070062">
    <property type="term" value="C:extracellular exosome"/>
    <property type="evidence" value="ECO:0000314"/>
    <property type="project" value="MGI"/>
</dbReference>
<dbReference type="GO" id="GO:0016020">
    <property type="term" value="C:membrane"/>
    <property type="evidence" value="ECO:0000314"/>
    <property type="project" value="MGI"/>
</dbReference>
<dbReference type="GO" id="GO:0032809">
    <property type="term" value="C:neuronal cell body membrane"/>
    <property type="evidence" value="ECO:0007669"/>
    <property type="project" value="Ensembl"/>
</dbReference>
<dbReference type="GO" id="GO:0031965">
    <property type="term" value="C:nuclear membrane"/>
    <property type="evidence" value="ECO:0000250"/>
    <property type="project" value="UniProtKB"/>
</dbReference>
<dbReference type="GO" id="GO:0005634">
    <property type="term" value="C:nucleus"/>
    <property type="evidence" value="ECO:0000250"/>
    <property type="project" value="UniProtKB"/>
</dbReference>
<dbReference type="GO" id="GO:0005886">
    <property type="term" value="C:plasma membrane"/>
    <property type="evidence" value="ECO:0000314"/>
    <property type="project" value="MGI"/>
</dbReference>
<dbReference type="GO" id="GO:0042383">
    <property type="term" value="C:sarcolemma"/>
    <property type="evidence" value="ECO:0000250"/>
    <property type="project" value="UniProtKB"/>
</dbReference>
<dbReference type="GO" id="GO:0008519">
    <property type="term" value="F:ammonium channel activity"/>
    <property type="evidence" value="ECO:0000250"/>
    <property type="project" value="UniProtKB"/>
</dbReference>
<dbReference type="GO" id="GO:0035379">
    <property type="term" value="F:carbon dioxide transmembrane transporter activity"/>
    <property type="evidence" value="ECO:0000250"/>
    <property type="project" value="UniProtKB"/>
</dbReference>
<dbReference type="GO" id="GO:0046875">
    <property type="term" value="F:ephrin receptor binding"/>
    <property type="evidence" value="ECO:0000353"/>
    <property type="project" value="UniProtKB"/>
</dbReference>
<dbReference type="GO" id="GO:0015168">
    <property type="term" value="F:glycerol transmembrane transporter activity"/>
    <property type="evidence" value="ECO:0000250"/>
    <property type="project" value="UniProtKB"/>
</dbReference>
<dbReference type="GO" id="GO:0140070">
    <property type="term" value="F:hydrogen peroxide channel activity"/>
    <property type="evidence" value="ECO:0007669"/>
    <property type="project" value="Ensembl"/>
</dbReference>
<dbReference type="GO" id="GO:0042802">
    <property type="term" value="F:identical protein binding"/>
    <property type="evidence" value="ECO:0007669"/>
    <property type="project" value="Ensembl"/>
</dbReference>
<dbReference type="GO" id="GO:0005223">
    <property type="term" value="F:intracellularly cGMP-activated cation channel activity"/>
    <property type="evidence" value="ECO:0000250"/>
    <property type="project" value="UniProtKB"/>
</dbReference>
<dbReference type="GO" id="GO:0030184">
    <property type="term" value="F:nitric oxide transmembrane transporter activity"/>
    <property type="evidence" value="ECO:0000250"/>
    <property type="project" value="UniProtKB"/>
</dbReference>
<dbReference type="GO" id="GO:0005267">
    <property type="term" value="F:potassium channel activity"/>
    <property type="evidence" value="ECO:0000250"/>
    <property type="project" value="UniProtKB"/>
</dbReference>
<dbReference type="GO" id="GO:0015079">
    <property type="term" value="F:potassium ion transmembrane transporter activity"/>
    <property type="evidence" value="ECO:0000314"/>
    <property type="project" value="UniProtKB"/>
</dbReference>
<dbReference type="GO" id="GO:0015250">
    <property type="term" value="F:water channel activity"/>
    <property type="evidence" value="ECO:0000250"/>
    <property type="project" value="UniProtKB"/>
</dbReference>
<dbReference type="GO" id="GO:0005372">
    <property type="term" value="F:water transmembrane transporter activity"/>
    <property type="evidence" value="ECO:0000314"/>
    <property type="project" value="MGI"/>
</dbReference>
<dbReference type="GO" id="GO:0072488">
    <property type="term" value="P:ammonium transmembrane transport"/>
    <property type="evidence" value="ECO:0000250"/>
    <property type="project" value="UniProtKB"/>
</dbReference>
<dbReference type="GO" id="GO:0048593">
    <property type="term" value="P:camera-type eye morphogenesis"/>
    <property type="evidence" value="ECO:0000315"/>
    <property type="project" value="MGI"/>
</dbReference>
<dbReference type="GO" id="GO:0035378">
    <property type="term" value="P:carbon dioxide transmembrane transport"/>
    <property type="evidence" value="ECO:0000250"/>
    <property type="project" value="UniProtKB"/>
</dbReference>
<dbReference type="GO" id="GO:0015670">
    <property type="term" value="P:carbon dioxide transport"/>
    <property type="evidence" value="ECO:0000250"/>
    <property type="project" value="UniProtKB"/>
</dbReference>
<dbReference type="GO" id="GO:0016477">
    <property type="term" value="P:cell migration"/>
    <property type="evidence" value="ECO:0000315"/>
    <property type="project" value="MGI"/>
</dbReference>
<dbReference type="GO" id="GO:0006884">
    <property type="term" value="P:cell volume homeostasis"/>
    <property type="evidence" value="ECO:0000250"/>
    <property type="project" value="UniProtKB"/>
</dbReference>
<dbReference type="GO" id="GO:0019725">
    <property type="term" value="P:cellular homeostasis"/>
    <property type="evidence" value="ECO:0000250"/>
    <property type="project" value="UniProtKB"/>
</dbReference>
<dbReference type="GO" id="GO:0071474">
    <property type="term" value="P:cellular hyperosmotic response"/>
    <property type="evidence" value="ECO:0000250"/>
    <property type="project" value="UniProtKB"/>
</dbReference>
<dbReference type="GO" id="GO:0071320">
    <property type="term" value="P:cellular response to cAMP"/>
    <property type="evidence" value="ECO:0000250"/>
    <property type="project" value="UniProtKB"/>
</dbReference>
<dbReference type="GO" id="GO:0071280">
    <property type="term" value="P:cellular response to copper ion"/>
    <property type="evidence" value="ECO:0000250"/>
    <property type="project" value="UniProtKB"/>
</dbReference>
<dbReference type="GO" id="GO:0071549">
    <property type="term" value="P:cellular response to dexamethasone stimulus"/>
    <property type="evidence" value="ECO:0000250"/>
    <property type="project" value="UniProtKB"/>
</dbReference>
<dbReference type="GO" id="GO:0070301">
    <property type="term" value="P:cellular response to hydrogen peroxide"/>
    <property type="evidence" value="ECO:0000250"/>
    <property type="project" value="UniProtKB"/>
</dbReference>
<dbReference type="GO" id="GO:0071456">
    <property type="term" value="P:cellular response to hypoxia"/>
    <property type="evidence" value="ECO:0000250"/>
    <property type="project" value="UniProtKB"/>
</dbReference>
<dbReference type="GO" id="GO:0071260">
    <property type="term" value="P:cellular response to mechanical stimulus"/>
    <property type="evidence" value="ECO:0000250"/>
    <property type="project" value="UniProtKB"/>
</dbReference>
<dbReference type="GO" id="GO:0071288">
    <property type="term" value="P:cellular response to mercury ion"/>
    <property type="evidence" value="ECO:0000250"/>
    <property type="project" value="UniProtKB"/>
</dbReference>
<dbReference type="GO" id="GO:0071732">
    <property type="term" value="P:cellular response to nitric oxide"/>
    <property type="evidence" value="ECO:0007669"/>
    <property type="project" value="Ensembl"/>
</dbReference>
<dbReference type="GO" id="GO:0071300">
    <property type="term" value="P:cellular response to retinoic acid"/>
    <property type="evidence" value="ECO:0000250"/>
    <property type="project" value="UniProtKB"/>
</dbReference>
<dbReference type="GO" id="GO:0071472">
    <property type="term" value="P:cellular response to salt stress"/>
    <property type="evidence" value="ECO:0000250"/>
    <property type="project" value="UniProtKB"/>
</dbReference>
<dbReference type="GO" id="GO:0034644">
    <property type="term" value="P:cellular response to UV"/>
    <property type="evidence" value="ECO:0000250"/>
    <property type="project" value="UniProtKB"/>
</dbReference>
<dbReference type="GO" id="GO:0033326">
    <property type="term" value="P:cerebrospinal fluid secretion"/>
    <property type="evidence" value="ECO:0007669"/>
    <property type="project" value="Ensembl"/>
</dbReference>
<dbReference type="GO" id="GO:0019934">
    <property type="term" value="P:cGMP-mediated signaling"/>
    <property type="evidence" value="ECO:0000250"/>
    <property type="project" value="UniProtKB"/>
</dbReference>
<dbReference type="GO" id="GO:0051458">
    <property type="term" value="P:corticotropin secretion"/>
    <property type="evidence" value="ECO:0000315"/>
    <property type="project" value="MGI"/>
</dbReference>
<dbReference type="GO" id="GO:0050829">
    <property type="term" value="P:defense response to Gram-negative bacterium"/>
    <property type="evidence" value="ECO:0000315"/>
    <property type="project" value="UniProtKB"/>
</dbReference>
<dbReference type="GO" id="GO:0051649">
    <property type="term" value="P:establishment of localization in cell"/>
    <property type="evidence" value="ECO:0000315"/>
    <property type="project" value="MGI"/>
</dbReference>
<dbReference type="GO" id="GO:0030950">
    <property type="term" value="P:establishment or maintenance of actin cytoskeleton polarity"/>
    <property type="evidence" value="ECO:0000250"/>
    <property type="project" value="UniProtKB"/>
</dbReference>
<dbReference type="GO" id="GO:0010761">
    <property type="term" value="P:fibroblast migration"/>
    <property type="evidence" value="ECO:0000315"/>
    <property type="project" value="MGI"/>
</dbReference>
<dbReference type="GO" id="GO:0003094">
    <property type="term" value="P:glomerular filtration"/>
    <property type="evidence" value="ECO:0000315"/>
    <property type="project" value="MGI"/>
</dbReference>
<dbReference type="GO" id="GO:0015793">
    <property type="term" value="P:glycerol transmembrane transport"/>
    <property type="evidence" value="ECO:0000250"/>
    <property type="project" value="UniProtKB"/>
</dbReference>
<dbReference type="GO" id="GO:0009992">
    <property type="term" value="P:intracellular water homeostasis"/>
    <property type="evidence" value="ECO:0000250"/>
    <property type="project" value="UniProtKB"/>
</dbReference>
<dbReference type="GO" id="GO:0021670">
    <property type="term" value="P:lateral ventricle development"/>
    <property type="evidence" value="ECO:0000270"/>
    <property type="project" value="UniProtKB"/>
</dbReference>
<dbReference type="GO" id="GO:0044241">
    <property type="term" value="P:lipid digestion"/>
    <property type="evidence" value="ECO:0000315"/>
    <property type="project" value="MGI"/>
</dbReference>
<dbReference type="GO" id="GO:0072220">
    <property type="term" value="P:metanephric descending thin limb development"/>
    <property type="evidence" value="ECO:0000270"/>
    <property type="project" value="UniProtKB"/>
</dbReference>
<dbReference type="GO" id="GO:0072239">
    <property type="term" value="P:metanephric glomerulus vasculature development"/>
    <property type="evidence" value="ECO:0000270"/>
    <property type="project" value="UniProtKB"/>
</dbReference>
<dbReference type="GO" id="GO:0072232">
    <property type="term" value="P:metanephric proximal convoluted tubule segment 2 development"/>
    <property type="evidence" value="ECO:0000270"/>
    <property type="project" value="UniProtKB"/>
</dbReference>
<dbReference type="GO" id="GO:0072230">
    <property type="term" value="P:metanephric proximal straight tubule development"/>
    <property type="evidence" value="ECO:0000270"/>
    <property type="project" value="UniProtKB"/>
</dbReference>
<dbReference type="GO" id="GO:0050891">
    <property type="term" value="P:multicellular organismal-level water homeostasis"/>
    <property type="evidence" value="ECO:0000315"/>
    <property type="project" value="MGI"/>
</dbReference>
<dbReference type="GO" id="GO:0043066">
    <property type="term" value="P:negative regulation of apoptotic process"/>
    <property type="evidence" value="ECO:0000250"/>
    <property type="project" value="UniProtKB"/>
</dbReference>
<dbReference type="GO" id="GO:0030185">
    <property type="term" value="P:nitric oxide transport"/>
    <property type="evidence" value="ECO:0000250"/>
    <property type="project" value="UniProtKB"/>
</dbReference>
<dbReference type="GO" id="GO:0042476">
    <property type="term" value="P:odontogenesis"/>
    <property type="evidence" value="ECO:0007669"/>
    <property type="project" value="Ensembl"/>
</dbReference>
<dbReference type="GO" id="GO:0030157">
    <property type="term" value="P:pancreatic juice secretion"/>
    <property type="evidence" value="ECO:0007669"/>
    <property type="project" value="Ensembl"/>
</dbReference>
<dbReference type="GO" id="GO:0045766">
    <property type="term" value="P:positive regulation of angiogenesis"/>
    <property type="evidence" value="ECO:0000250"/>
    <property type="project" value="UniProtKB"/>
</dbReference>
<dbReference type="GO" id="GO:0010634">
    <property type="term" value="P:positive regulation of epithelial cell migration"/>
    <property type="evidence" value="ECO:0007669"/>
    <property type="project" value="Ensembl"/>
</dbReference>
<dbReference type="GO" id="GO:0010763">
    <property type="term" value="P:positive regulation of fibroblast migration"/>
    <property type="evidence" value="ECO:0000315"/>
    <property type="project" value="MGI"/>
</dbReference>
<dbReference type="GO" id="GO:0048146">
    <property type="term" value="P:positive regulation of fibroblast proliferation"/>
    <property type="evidence" value="ECO:0000250"/>
    <property type="project" value="UniProtKB"/>
</dbReference>
<dbReference type="GO" id="GO:0010592">
    <property type="term" value="P:positive regulation of lamellipodium assembly"/>
    <property type="evidence" value="ECO:0007669"/>
    <property type="project" value="Ensembl"/>
</dbReference>
<dbReference type="GO" id="GO:0046878">
    <property type="term" value="P:positive regulation of saliva secretion"/>
    <property type="evidence" value="ECO:0000250"/>
    <property type="project" value="UniProtKB"/>
</dbReference>
<dbReference type="GO" id="GO:0006813">
    <property type="term" value="P:potassium ion transport"/>
    <property type="evidence" value="ECO:0000314"/>
    <property type="project" value="UniProtKB"/>
</dbReference>
<dbReference type="GO" id="GO:0070295">
    <property type="term" value="P:renal water absorption"/>
    <property type="evidence" value="ECO:0000315"/>
    <property type="project" value="MGI"/>
</dbReference>
<dbReference type="GO" id="GO:0043627">
    <property type="term" value="P:response to estrogen"/>
    <property type="evidence" value="ECO:0007669"/>
    <property type="project" value="Ensembl"/>
</dbReference>
<dbReference type="GO" id="GO:0032940">
    <property type="term" value="P:secretion by cell"/>
    <property type="evidence" value="ECO:0000315"/>
    <property type="project" value="MGI"/>
</dbReference>
<dbReference type="GO" id="GO:0033363">
    <property type="term" value="P:secretory granule organization"/>
    <property type="evidence" value="ECO:0000315"/>
    <property type="project" value="MGI"/>
</dbReference>
<dbReference type="GO" id="GO:0019233">
    <property type="term" value="P:sensory perception of pain"/>
    <property type="evidence" value="ECO:0000315"/>
    <property type="project" value="MGI"/>
</dbReference>
<dbReference type="GO" id="GO:0035377">
    <property type="term" value="P:transepithelial water transport"/>
    <property type="evidence" value="ECO:0000250"/>
    <property type="project" value="UniProtKB"/>
</dbReference>
<dbReference type="GO" id="GO:0006833">
    <property type="term" value="P:water transport"/>
    <property type="evidence" value="ECO:0000314"/>
    <property type="project" value="MGI"/>
</dbReference>
<dbReference type="GO" id="GO:0042060">
    <property type="term" value="P:wound healing"/>
    <property type="evidence" value="ECO:0000315"/>
    <property type="project" value="MGI"/>
</dbReference>
<dbReference type="CDD" id="cd00333">
    <property type="entry name" value="MIP"/>
    <property type="match status" value="1"/>
</dbReference>
<dbReference type="FunFam" id="1.20.1080.10:FF:000012">
    <property type="entry name" value="Aquaporin-1"/>
    <property type="match status" value="1"/>
</dbReference>
<dbReference type="Gene3D" id="1.20.1080.10">
    <property type="entry name" value="Glycerol uptake facilitator protein"/>
    <property type="match status" value="1"/>
</dbReference>
<dbReference type="InterPro" id="IPR023271">
    <property type="entry name" value="Aquaporin-like"/>
</dbReference>
<dbReference type="InterPro" id="IPR023274">
    <property type="entry name" value="Aquaporin_1"/>
</dbReference>
<dbReference type="InterPro" id="IPR034294">
    <property type="entry name" value="Aquaporin_transptr"/>
</dbReference>
<dbReference type="InterPro" id="IPR000425">
    <property type="entry name" value="MIP"/>
</dbReference>
<dbReference type="InterPro" id="IPR022357">
    <property type="entry name" value="MIP_CS"/>
</dbReference>
<dbReference type="NCBIfam" id="TIGR00861">
    <property type="entry name" value="MIP"/>
    <property type="match status" value="1"/>
</dbReference>
<dbReference type="PANTHER" id="PTHR19139">
    <property type="entry name" value="AQUAPORIN TRANSPORTER"/>
    <property type="match status" value="1"/>
</dbReference>
<dbReference type="PANTHER" id="PTHR19139:SF161">
    <property type="entry name" value="AQUAPORIN-1"/>
    <property type="match status" value="1"/>
</dbReference>
<dbReference type="Pfam" id="PF00230">
    <property type="entry name" value="MIP"/>
    <property type="match status" value="1"/>
</dbReference>
<dbReference type="PRINTS" id="PR02013">
    <property type="entry name" value="AQUAPORIN1"/>
</dbReference>
<dbReference type="PRINTS" id="PR00783">
    <property type="entry name" value="MINTRINSICP"/>
</dbReference>
<dbReference type="SUPFAM" id="SSF81338">
    <property type="entry name" value="Aquaporin-like"/>
    <property type="match status" value="1"/>
</dbReference>
<dbReference type="PROSITE" id="PS00221">
    <property type="entry name" value="MIP"/>
    <property type="match status" value="1"/>
</dbReference>
<reference key="1">
    <citation type="journal article" date="1992" name="Mol. Cell. Biol.">
        <title>Growth factor-induced delayed early response genes.</title>
        <authorList>
            <person name="Lanahan A.A."/>
            <person name="Williams J.B."/>
            <person name="Sanders L.K."/>
            <person name="Nathans D."/>
        </authorList>
    </citation>
    <scope>NUCLEOTIDE SEQUENCE [MRNA]</scope>
    <source>
        <strain>BALB/cJ</strain>
    </source>
</reference>
<reference key="2">
    <citation type="journal article" date="2005" name="Science">
        <title>The transcriptional landscape of the mammalian genome.</title>
        <authorList>
            <person name="Carninci P."/>
            <person name="Kasukawa T."/>
            <person name="Katayama S."/>
            <person name="Gough J."/>
            <person name="Frith M.C."/>
            <person name="Maeda N."/>
            <person name="Oyama R."/>
            <person name="Ravasi T."/>
            <person name="Lenhard B."/>
            <person name="Wells C."/>
            <person name="Kodzius R."/>
            <person name="Shimokawa K."/>
            <person name="Bajic V.B."/>
            <person name="Brenner S.E."/>
            <person name="Batalov S."/>
            <person name="Forrest A.R."/>
            <person name="Zavolan M."/>
            <person name="Davis M.J."/>
            <person name="Wilming L.G."/>
            <person name="Aidinis V."/>
            <person name="Allen J.E."/>
            <person name="Ambesi-Impiombato A."/>
            <person name="Apweiler R."/>
            <person name="Aturaliya R.N."/>
            <person name="Bailey T.L."/>
            <person name="Bansal M."/>
            <person name="Baxter L."/>
            <person name="Beisel K.W."/>
            <person name="Bersano T."/>
            <person name="Bono H."/>
            <person name="Chalk A.M."/>
            <person name="Chiu K.P."/>
            <person name="Choudhary V."/>
            <person name="Christoffels A."/>
            <person name="Clutterbuck D.R."/>
            <person name="Crowe M.L."/>
            <person name="Dalla E."/>
            <person name="Dalrymple B.P."/>
            <person name="de Bono B."/>
            <person name="Della Gatta G."/>
            <person name="di Bernardo D."/>
            <person name="Down T."/>
            <person name="Engstrom P."/>
            <person name="Fagiolini M."/>
            <person name="Faulkner G."/>
            <person name="Fletcher C.F."/>
            <person name="Fukushima T."/>
            <person name="Furuno M."/>
            <person name="Futaki S."/>
            <person name="Gariboldi M."/>
            <person name="Georgii-Hemming P."/>
            <person name="Gingeras T.R."/>
            <person name="Gojobori T."/>
            <person name="Green R.E."/>
            <person name="Gustincich S."/>
            <person name="Harbers M."/>
            <person name="Hayashi Y."/>
            <person name="Hensch T.K."/>
            <person name="Hirokawa N."/>
            <person name="Hill D."/>
            <person name="Huminiecki L."/>
            <person name="Iacono M."/>
            <person name="Ikeo K."/>
            <person name="Iwama A."/>
            <person name="Ishikawa T."/>
            <person name="Jakt M."/>
            <person name="Kanapin A."/>
            <person name="Katoh M."/>
            <person name="Kawasawa Y."/>
            <person name="Kelso J."/>
            <person name="Kitamura H."/>
            <person name="Kitano H."/>
            <person name="Kollias G."/>
            <person name="Krishnan S.P."/>
            <person name="Kruger A."/>
            <person name="Kummerfeld S.K."/>
            <person name="Kurochkin I.V."/>
            <person name="Lareau L.F."/>
            <person name="Lazarevic D."/>
            <person name="Lipovich L."/>
            <person name="Liu J."/>
            <person name="Liuni S."/>
            <person name="McWilliam S."/>
            <person name="Madan Babu M."/>
            <person name="Madera M."/>
            <person name="Marchionni L."/>
            <person name="Matsuda H."/>
            <person name="Matsuzawa S."/>
            <person name="Miki H."/>
            <person name="Mignone F."/>
            <person name="Miyake S."/>
            <person name="Morris K."/>
            <person name="Mottagui-Tabar S."/>
            <person name="Mulder N."/>
            <person name="Nakano N."/>
            <person name="Nakauchi H."/>
            <person name="Ng P."/>
            <person name="Nilsson R."/>
            <person name="Nishiguchi S."/>
            <person name="Nishikawa S."/>
            <person name="Nori F."/>
            <person name="Ohara O."/>
            <person name="Okazaki Y."/>
            <person name="Orlando V."/>
            <person name="Pang K.C."/>
            <person name="Pavan W.J."/>
            <person name="Pavesi G."/>
            <person name="Pesole G."/>
            <person name="Petrovsky N."/>
            <person name="Piazza S."/>
            <person name="Reed J."/>
            <person name="Reid J.F."/>
            <person name="Ring B.Z."/>
            <person name="Ringwald M."/>
            <person name="Rost B."/>
            <person name="Ruan Y."/>
            <person name="Salzberg S.L."/>
            <person name="Sandelin A."/>
            <person name="Schneider C."/>
            <person name="Schoenbach C."/>
            <person name="Sekiguchi K."/>
            <person name="Semple C.A."/>
            <person name="Seno S."/>
            <person name="Sessa L."/>
            <person name="Sheng Y."/>
            <person name="Shibata Y."/>
            <person name="Shimada H."/>
            <person name="Shimada K."/>
            <person name="Silva D."/>
            <person name="Sinclair B."/>
            <person name="Sperling S."/>
            <person name="Stupka E."/>
            <person name="Sugiura K."/>
            <person name="Sultana R."/>
            <person name="Takenaka Y."/>
            <person name="Taki K."/>
            <person name="Tammoja K."/>
            <person name="Tan S.L."/>
            <person name="Tang S."/>
            <person name="Taylor M.S."/>
            <person name="Tegner J."/>
            <person name="Teichmann S.A."/>
            <person name="Ueda H.R."/>
            <person name="van Nimwegen E."/>
            <person name="Verardo R."/>
            <person name="Wei C.L."/>
            <person name="Yagi K."/>
            <person name="Yamanishi H."/>
            <person name="Zabarovsky E."/>
            <person name="Zhu S."/>
            <person name="Zimmer A."/>
            <person name="Hide W."/>
            <person name="Bult C."/>
            <person name="Grimmond S.M."/>
            <person name="Teasdale R.D."/>
            <person name="Liu E.T."/>
            <person name="Brusic V."/>
            <person name="Quackenbush J."/>
            <person name="Wahlestedt C."/>
            <person name="Mattick J.S."/>
            <person name="Hume D.A."/>
            <person name="Kai C."/>
            <person name="Sasaki D."/>
            <person name="Tomaru Y."/>
            <person name="Fukuda S."/>
            <person name="Kanamori-Katayama M."/>
            <person name="Suzuki M."/>
            <person name="Aoki J."/>
            <person name="Arakawa T."/>
            <person name="Iida J."/>
            <person name="Imamura K."/>
            <person name="Itoh M."/>
            <person name="Kato T."/>
            <person name="Kawaji H."/>
            <person name="Kawagashira N."/>
            <person name="Kawashima T."/>
            <person name="Kojima M."/>
            <person name="Kondo S."/>
            <person name="Konno H."/>
            <person name="Nakano K."/>
            <person name="Ninomiya N."/>
            <person name="Nishio T."/>
            <person name="Okada M."/>
            <person name="Plessy C."/>
            <person name="Shibata K."/>
            <person name="Shiraki T."/>
            <person name="Suzuki S."/>
            <person name="Tagami M."/>
            <person name="Waki K."/>
            <person name="Watahiki A."/>
            <person name="Okamura-Oho Y."/>
            <person name="Suzuki H."/>
            <person name="Kawai J."/>
            <person name="Hayashizaki Y."/>
        </authorList>
    </citation>
    <scope>NUCLEOTIDE SEQUENCE [LARGE SCALE MRNA]</scope>
    <source>
        <strain>C57BL/6J</strain>
        <strain>NOD</strain>
        <tissue>Head</tissue>
        <tissue>Inner ear</tissue>
        <tissue>Spleen</tissue>
    </source>
</reference>
<reference key="3">
    <citation type="journal article" date="2004" name="Genome Res.">
        <title>The status, quality, and expansion of the NIH full-length cDNA project: the Mammalian Gene Collection (MGC).</title>
        <authorList>
            <consortium name="The MGC Project Team"/>
        </authorList>
    </citation>
    <scope>NUCLEOTIDE SEQUENCE [LARGE SCALE MRNA]</scope>
    <source>
        <tissue>Mammary tumor</tissue>
    </source>
</reference>
<reference key="4">
    <citation type="journal article" date="2000" name="Neuron">
        <title>EphB2 guides axons at the midline and is necessary for normal vestibular function.</title>
        <authorList>
            <person name="Cowan C.A."/>
            <person name="Yokoyama N."/>
            <person name="Bianchi L.M."/>
            <person name="Henkemeyer M."/>
            <person name="Fritzsch B."/>
        </authorList>
    </citation>
    <scope>INTERACTION WITH EPHB2</scope>
</reference>
<reference key="5">
    <citation type="journal article" date="2002" name="J. Biol. Chem.">
        <title>Analysis of double knockout mice lacking aquaporin-1 and urea transporter UT-B. Evidence for UT-B-facilitated water transport in erythrocytes.</title>
        <authorList>
            <person name="Yang B."/>
            <person name="Verkman A.S."/>
        </authorList>
    </citation>
    <scope>FUNCTION</scope>
    <scope>DISRUPTION PHENOTYPE</scope>
    <scope>SUBCELLULAR LOCATION</scope>
    <scope>TISSUE SPECIFICITY</scope>
</reference>
<reference key="6">
    <citation type="journal article" date="2007" name="Proc. Natl. Acad. Sci. U.S.A.">
        <title>Large-scale phosphorylation analysis of mouse liver.</title>
        <authorList>
            <person name="Villen J."/>
            <person name="Beausoleil S.A."/>
            <person name="Gerber S.A."/>
            <person name="Gygi S.P."/>
        </authorList>
    </citation>
    <scope>PHOSPHORYLATION [LARGE SCALE ANALYSIS] AT SER-262</scope>
    <scope>IDENTIFICATION BY MASS SPECTROMETRY [LARGE SCALE ANALYSIS]</scope>
    <source>
        <tissue>Liver</tissue>
    </source>
</reference>
<reference key="7">
    <citation type="journal article" date="2010" name="Cell">
        <title>A tissue-specific atlas of mouse protein phosphorylation and expression.</title>
        <authorList>
            <person name="Huttlin E.L."/>
            <person name="Jedrychowski M.P."/>
            <person name="Elias J.E."/>
            <person name="Goswami T."/>
            <person name="Rad R."/>
            <person name="Beausoleil S.A."/>
            <person name="Villen J."/>
            <person name="Haas W."/>
            <person name="Sowa M.E."/>
            <person name="Gygi S.P."/>
        </authorList>
    </citation>
    <scope>PHOSPHORYLATION [LARGE SCALE ANALYSIS] AT SER-247; TYR-253 AND SER-262</scope>
    <scope>IDENTIFICATION BY MASS SPECTROMETRY [LARGE SCALE ANALYSIS]</scope>
    <source>
        <tissue>Brain</tissue>
        <tissue>Brown adipose tissue</tissue>
        <tissue>Heart</tissue>
        <tissue>Kidney</tissue>
        <tissue>Liver</tissue>
        <tissue>Lung</tissue>
        <tissue>Pancreas</tissue>
        <tissue>Spleen</tissue>
    </source>
</reference>
<reference key="8">
    <citation type="journal article" date="2020" name="FEBS J.">
        <title>Identification and classification of epithelial cells in nephron segments by actin cytoskeleton patterns.</title>
        <authorList>
            <person name="Kumaran G.K."/>
            <person name="Hanukoglu I."/>
        </authorList>
    </citation>
    <scope>TISSUE SPECIFICITY</scope>
</reference>
<keyword id="KW-1003">Cell membrane</keyword>
<keyword id="KW-0325">Glycoprotein</keyword>
<keyword id="KW-0472">Membrane</keyword>
<keyword id="KW-0597">Phosphoprotein</keyword>
<keyword id="KW-1185">Reference proteome</keyword>
<keyword id="KW-0677">Repeat</keyword>
<keyword id="KW-0812">Transmembrane</keyword>
<keyword id="KW-1133">Transmembrane helix</keyword>
<keyword id="KW-0813">Transport</keyword>
<sequence>MASEIKKKLFWRAVVAEFLAMTLFVFISIGSALGFNYPLERNQTLVQDNVKVSLAFGLSIATLAQSVGHISGAHLNPAVTLGLLLSCQISILRAVMYIIAQCVGAIVATAILSGITSSLVDNSLGRNDLAHGVNSGQGLGIEIIGTLQLVLCVLATTDRRRRDLGGSAPLAIGLSVALGHLLAIDYTGCGINPARSFGSAVLTRNFSNHWIFWVGPFIGGALAVLIYDFILAPRSSDFTDRMKVWTSGQVEEYDLDADDINSRVEMKPK</sequence>
<gene>
    <name evidence="9" type="primary">Aqp1</name>
</gene>
<organism>
    <name type="scientific">Mus musculus</name>
    <name type="common">Mouse</name>
    <dbReference type="NCBI Taxonomy" id="10090"/>
    <lineage>
        <taxon>Eukaryota</taxon>
        <taxon>Metazoa</taxon>
        <taxon>Chordata</taxon>
        <taxon>Craniata</taxon>
        <taxon>Vertebrata</taxon>
        <taxon>Euteleostomi</taxon>
        <taxon>Mammalia</taxon>
        <taxon>Eutheria</taxon>
        <taxon>Euarchontoglires</taxon>
        <taxon>Glires</taxon>
        <taxon>Rodentia</taxon>
        <taxon>Myomorpha</taxon>
        <taxon>Muroidea</taxon>
        <taxon>Muridae</taxon>
        <taxon>Murinae</taxon>
        <taxon>Mus</taxon>
        <taxon>Mus</taxon>
    </lineage>
</organism>
<feature type="chain" id="PRO_0000063921" description="Aquaporin-1">
    <location>
        <begin position="1"/>
        <end position="269"/>
    </location>
</feature>
<feature type="topological domain" description="Cytoplasmic" evidence="8">
    <location>
        <begin position="1"/>
        <end position="11"/>
    </location>
</feature>
<feature type="transmembrane region" description="Helical; Name=Helix 1" evidence="2">
    <location>
        <begin position="12"/>
        <end position="29"/>
    </location>
</feature>
<feature type="topological domain" description="Extracellular" evidence="8">
    <location>
        <begin position="30"/>
        <end position="46"/>
    </location>
</feature>
<feature type="transmembrane region" description="Helical; Name=Helix 2" evidence="2">
    <location>
        <begin position="47"/>
        <end position="65"/>
    </location>
</feature>
<feature type="topological domain" description="Cytoplasmic" evidence="8">
    <location>
        <begin position="66"/>
        <end position="68"/>
    </location>
</feature>
<feature type="intramembrane region" evidence="2">
    <location>
        <begin position="69"/>
        <end position="82"/>
    </location>
</feature>
<feature type="topological domain" description="Cytoplasmic" evidence="8">
    <location>
        <begin position="83"/>
        <end position="90"/>
    </location>
</feature>
<feature type="transmembrane region" description="Helical; Name=Helix 3" evidence="2">
    <location>
        <begin position="91"/>
        <end position="109"/>
    </location>
</feature>
<feature type="topological domain" description="Extracellular" evidence="8">
    <location>
        <begin position="110"/>
        <end position="133"/>
    </location>
</feature>
<feature type="transmembrane region" description="Helical; Name=Helix 4" evidence="2">
    <location>
        <begin position="134"/>
        <end position="153"/>
    </location>
</feature>
<feature type="topological domain" description="Cytoplasmic" evidence="8">
    <location>
        <begin position="154"/>
        <end position="163"/>
    </location>
</feature>
<feature type="transmembrane region" description="Helical; Name=Helix 5" evidence="2">
    <location>
        <begin position="164"/>
        <end position="181"/>
    </location>
</feature>
<feature type="topological domain" description="Extracellular" evidence="8">
    <location>
        <begin position="182"/>
        <end position="186"/>
    </location>
</feature>
<feature type="intramembrane region" evidence="2">
    <location>
        <begin position="187"/>
        <end position="199"/>
    </location>
</feature>
<feature type="topological domain" description="Extracellular" evidence="8">
    <location>
        <begin position="200"/>
        <end position="206"/>
    </location>
</feature>
<feature type="transmembrane region" description="Helical; Name=Helix 6" evidence="2">
    <location>
        <begin position="207"/>
        <end position="224"/>
    </location>
</feature>
<feature type="topological domain" description="Cytoplasmic" evidence="8">
    <location>
        <begin position="225"/>
        <end position="269"/>
    </location>
</feature>
<feature type="short sequence motif" description="NPA 1" evidence="2">
    <location>
        <begin position="76"/>
        <end position="78"/>
    </location>
</feature>
<feature type="short sequence motif" description="NPA 2" evidence="2">
    <location>
        <begin position="192"/>
        <end position="194"/>
    </location>
</feature>
<feature type="modified residue" description="Phosphoserine" evidence="11">
    <location>
        <position position="247"/>
    </location>
</feature>
<feature type="modified residue" description="Phosphotyrosine" evidence="11">
    <location>
        <position position="253"/>
    </location>
</feature>
<feature type="modified residue" description="Phosphoserine" evidence="10 11">
    <location>
        <position position="262"/>
    </location>
</feature>
<feature type="glycosylation site" description="N-linked (GlcNAc...) asparagine" evidence="3">
    <location>
        <position position="205"/>
    </location>
</feature>
<feature type="sequence conflict" description="In Ref. 3; AAH07125." evidence="8" ref="3">
    <original>G</original>
    <variation>S</variation>
    <location>
        <position position="190"/>
    </location>
</feature>
<proteinExistence type="evidence at protein level"/>
<protein>
    <recommendedName>
        <fullName evidence="8">Aquaporin-1</fullName>
        <shortName>AQP-1</shortName>
    </recommendedName>
    <alternativeName>
        <fullName>Aquaporin-CHIP</fullName>
    </alternativeName>
    <alternativeName>
        <fullName evidence="7">Delayed early response protein 2</fullName>
        <shortName evidence="7">DER2</shortName>
    </alternativeName>
</protein>